<evidence type="ECO:0000255" key="1">
    <source>
        <dbReference type="HAMAP-Rule" id="MF_01363"/>
    </source>
</evidence>
<evidence type="ECO:0000305" key="2"/>
<reference key="1">
    <citation type="journal article" date="2008" name="PLoS ONE">
        <title>Comparative analysis of Acinetobacters: three genomes for three lifestyles.</title>
        <authorList>
            <person name="Vallenet D."/>
            <person name="Nordmann P."/>
            <person name="Barbe V."/>
            <person name="Poirel L."/>
            <person name="Mangenot S."/>
            <person name="Bataille E."/>
            <person name="Dossat C."/>
            <person name="Gas S."/>
            <person name="Kreimeyer A."/>
            <person name="Lenoble P."/>
            <person name="Oztas S."/>
            <person name="Poulain J."/>
            <person name="Segurens B."/>
            <person name="Robert C."/>
            <person name="Abergel C."/>
            <person name="Claverie J.-M."/>
            <person name="Raoult D."/>
            <person name="Medigue C."/>
            <person name="Weissenbach J."/>
            <person name="Cruveiller S."/>
        </authorList>
    </citation>
    <scope>NUCLEOTIDE SEQUENCE [LARGE SCALE GENOMIC DNA]</scope>
    <source>
        <strain>AYE</strain>
    </source>
</reference>
<gene>
    <name evidence="1" type="primary">rplU</name>
    <name type="ordered locus">ABAYE0753</name>
</gene>
<organism>
    <name type="scientific">Acinetobacter baumannii (strain AYE)</name>
    <dbReference type="NCBI Taxonomy" id="509173"/>
    <lineage>
        <taxon>Bacteria</taxon>
        <taxon>Pseudomonadati</taxon>
        <taxon>Pseudomonadota</taxon>
        <taxon>Gammaproteobacteria</taxon>
        <taxon>Moraxellales</taxon>
        <taxon>Moraxellaceae</taxon>
        <taxon>Acinetobacter</taxon>
        <taxon>Acinetobacter calcoaceticus/baumannii complex</taxon>
    </lineage>
</organism>
<keyword id="KW-0687">Ribonucleoprotein</keyword>
<keyword id="KW-0689">Ribosomal protein</keyword>
<keyword id="KW-0694">RNA-binding</keyword>
<keyword id="KW-0699">rRNA-binding</keyword>
<comment type="function">
    <text evidence="1">This protein binds to 23S rRNA in the presence of protein L20.</text>
</comment>
<comment type="subunit">
    <text evidence="1">Part of the 50S ribosomal subunit. Contacts protein L20.</text>
</comment>
<comment type="similarity">
    <text evidence="1">Belongs to the bacterial ribosomal protein bL21 family.</text>
</comment>
<proteinExistence type="inferred from homology"/>
<feature type="chain" id="PRO_1000143744" description="Large ribosomal subunit protein bL21">
    <location>
        <begin position="1"/>
        <end position="103"/>
    </location>
</feature>
<protein>
    <recommendedName>
        <fullName evidence="1">Large ribosomal subunit protein bL21</fullName>
    </recommendedName>
    <alternativeName>
        <fullName evidence="2">50S ribosomal protein L21</fullName>
    </alternativeName>
</protein>
<name>RL21_ACIBY</name>
<accession>B0VEJ4</accession>
<dbReference type="EMBL" id="CU459141">
    <property type="protein sequence ID" value="CAM85712.1"/>
    <property type="molecule type" value="Genomic_DNA"/>
</dbReference>
<dbReference type="RefSeq" id="WP_000271409.1">
    <property type="nucleotide sequence ID" value="NZ_JBDGFB010000002.1"/>
</dbReference>
<dbReference type="SMR" id="B0VEJ4"/>
<dbReference type="EnsemblBacteria" id="CAM85712">
    <property type="protein sequence ID" value="CAM85712"/>
    <property type="gene ID" value="ABAYE0753"/>
</dbReference>
<dbReference type="GeneID" id="92895006"/>
<dbReference type="KEGG" id="aby:ABAYE0753"/>
<dbReference type="HOGENOM" id="CLU_061463_3_2_6"/>
<dbReference type="GO" id="GO:0005737">
    <property type="term" value="C:cytoplasm"/>
    <property type="evidence" value="ECO:0007669"/>
    <property type="project" value="UniProtKB-ARBA"/>
</dbReference>
<dbReference type="GO" id="GO:1990904">
    <property type="term" value="C:ribonucleoprotein complex"/>
    <property type="evidence" value="ECO:0007669"/>
    <property type="project" value="UniProtKB-KW"/>
</dbReference>
<dbReference type="GO" id="GO:0005840">
    <property type="term" value="C:ribosome"/>
    <property type="evidence" value="ECO:0007669"/>
    <property type="project" value="UniProtKB-KW"/>
</dbReference>
<dbReference type="GO" id="GO:0019843">
    <property type="term" value="F:rRNA binding"/>
    <property type="evidence" value="ECO:0007669"/>
    <property type="project" value="UniProtKB-UniRule"/>
</dbReference>
<dbReference type="GO" id="GO:0003735">
    <property type="term" value="F:structural constituent of ribosome"/>
    <property type="evidence" value="ECO:0007669"/>
    <property type="project" value="InterPro"/>
</dbReference>
<dbReference type="GO" id="GO:0006412">
    <property type="term" value="P:translation"/>
    <property type="evidence" value="ECO:0007669"/>
    <property type="project" value="UniProtKB-UniRule"/>
</dbReference>
<dbReference type="HAMAP" id="MF_01363">
    <property type="entry name" value="Ribosomal_bL21"/>
    <property type="match status" value="1"/>
</dbReference>
<dbReference type="InterPro" id="IPR028909">
    <property type="entry name" value="bL21-like"/>
</dbReference>
<dbReference type="InterPro" id="IPR036164">
    <property type="entry name" value="bL21-like_sf"/>
</dbReference>
<dbReference type="InterPro" id="IPR001787">
    <property type="entry name" value="Ribosomal_bL21"/>
</dbReference>
<dbReference type="InterPro" id="IPR018258">
    <property type="entry name" value="Ribosomal_bL21_CS"/>
</dbReference>
<dbReference type="NCBIfam" id="TIGR00061">
    <property type="entry name" value="L21"/>
    <property type="match status" value="1"/>
</dbReference>
<dbReference type="PANTHER" id="PTHR21349">
    <property type="entry name" value="50S RIBOSOMAL PROTEIN L21"/>
    <property type="match status" value="1"/>
</dbReference>
<dbReference type="PANTHER" id="PTHR21349:SF0">
    <property type="entry name" value="LARGE RIBOSOMAL SUBUNIT PROTEIN BL21M"/>
    <property type="match status" value="1"/>
</dbReference>
<dbReference type="Pfam" id="PF00829">
    <property type="entry name" value="Ribosomal_L21p"/>
    <property type="match status" value="1"/>
</dbReference>
<dbReference type="SUPFAM" id="SSF141091">
    <property type="entry name" value="L21p-like"/>
    <property type="match status" value="1"/>
</dbReference>
<dbReference type="PROSITE" id="PS01169">
    <property type="entry name" value="RIBOSOMAL_L21"/>
    <property type="match status" value="1"/>
</dbReference>
<sequence length="103" mass="11474">MYAVIQSGGKQHRVVEGETLKVELLKAESGATITFDDVLMVVNGDNIQIGAPVVAGAKVTAEVIGHGRHDKIRIIKMRRRKHYRKQQGHRQWFTELKITGISG</sequence>